<sequence length="59" mass="6600">MAKTIKVTQVRSSIGRLPKHKATLLGLGLRRIGHTVEREDTPALRGMINLVSYMVKVEE</sequence>
<reference key="1">
    <citation type="journal article" date="1994" name="DNA Res.">
        <title>Cloning and characterization of the ribosomal protein genes in the spc operon of a prokaryotic endosymbiont of the pea aphid, Acyrthosiphon kondoi.</title>
        <authorList>
            <person name="Abe R."/>
            <person name="Yamashita A."/>
            <person name="Isono K."/>
        </authorList>
    </citation>
    <scope>NUCLEOTIDE SEQUENCE [GENOMIC DNA]</scope>
    <source>
        <strain>Kurashiki</strain>
    </source>
</reference>
<protein>
    <recommendedName>
        <fullName evidence="1">Large ribosomal subunit protein uL30</fullName>
    </recommendedName>
    <alternativeName>
        <fullName evidence="2">50S ribosomal protein L30</fullName>
    </alternativeName>
</protein>
<dbReference type="EMBL" id="D31786">
    <property type="protein sequence ID" value="BAA06593.1"/>
    <property type="molecule type" value="Genomic_DNA"/>
</dbReference>
<dbReference type="EMBL" id="D16555">
    <property type="protein sequence ID" value="BAA03985.1"/>
    <property type="molecule type" value="Genomic_DNA"/>
</dbReference>
<dbReference type="SMR" id="P46184"/>
<dbReference type="GO" id="GO:0022625">
    <property type="term" value="C:cytosolic large ribosomal subunit"/>
    <property type="evidence" value="ECO:0007669"/>
    <property type="project" value="TreeGrafter"/>
</dbReference>
<dbReference type="GO" id="GO:0003735">
    <property type="term" value="F:structural constituent of ribosome"/>
    <property type="evidence" value="ECO:0007669"/>
    <property type="project" value="InterPro"/>
</dbReference>
<dbReference type="GO" id="GO:0006412">
    <property type="term" value="P:translation"/>
    <property type="evidence" value="ECO:0007669"/>
    <property type="project" value="UniProtKB-UniRule"/>
</dbReference>
<dbReference type="CDD" id="cd01658">
    <property type="entry name" value="Ribosomal_L30"/>
    <property type="match status" value="1"/>
</dbReference>
<dbReference type="FunFam" id="3.30.1390.20:FF:000001">
    <property type="entry name" value="50S ribosomal protein L30"/>
    <property type="match status" value="1"/>
</dbReference>
<dbReference type="Gene3D" id="3.30.1390.20">
    <property type="entry name" value="Ribosomal protein L30, ferredoxin-like fold domain"/>
    <property type="match status" value="1"/>
</dbReference>
<dbReference type="HAMAP" id="MF_01371_B">
    <property type="entry name" value="Ribosomal_uL30_B"/>
    <property type="match status" value="1"/>
</dbReference>
<dbReference type="InterPro" id="IPR036919">
    <property type="entry name" value="Ribo_uL30_ferredoxin-like_sf"/>
</dbReference>
<dbReference type="InterPro" id="IPR005996">
    <property type="entry name" value="Ribosomal_uL30_bac-type"/>
</dbReference>
<dbReference type="InterPro" id="IPR018038">
    <property type="entry name" value="Ribosomal_uL30_CS"/>
</dbReference>
<dbReference type="InterPro" id="IPR016082">
    <property type="entry name" value="Ribosomal_uL30_ferredoxin-like"/>
</dbReference>
<dbReference type="NCBIfam" id="TIGR01308">
    <property type="entry name" value="rpmD_bact"/>
    <property type="match status" value="1"/>
</dbReference>
<dbReference type="PANTHER" id="PTHR15892:SF2">
    <property type="entry name" value="LARGE RIBOSOMAL SUBUNIT PROTEIN UL30M"/>
    <property type="match status" value="1"/>
</dbReference>
<dbReference type="PANTHER" id="PTHR15892">
    <property type="entry name" value="MITOCHONDRIAL RIBOSOMAL PROTEIN L30"/>
    <property type="match status" value="1"/>
</dbReference>
<dbReference type="Pfam" id="PF00327">
    <property type="entry name" value="Ribosomal_L30"/>
    <property type="match status" value="1"/>
</dbReference>
<dbReference type="PIRSF" id="PIRSF002211">
    <property type="entry name" value="Ribosomal_L30_bac-type"/>
    <property type="match status" value="1"/>
</dbReference>
<dbReference type="SUPFAM" id="SSF55129">
    <property type="entry name" value="Ribosomal protein L30p/L7e"/>
    <property type="match status" value="1"/>
</dbReference>
<dbReference type="PROSITE" id="PS00634">
    <property type="entry name" value="RIBOSOMAL_L30"/>
    <property type="match status" value="1"/>
</dbReference>
<evidence type="ECO:0000255" key="1">
    <source>
        <dbReference type="HAMAP-Rule" id="MF_01371"/>
    </source>
</evidence>
<evidence type="ECO:0000305" key="2"/>
<keyword id="KW-0687">Ribonucleoprotein</keyword>
<keyword id="KW-0689">Ribosomal protein</keyword>
<name>RL30_BUCAK</name>
<feature type="chain" id="PRO_0000104586" description="Large ribosomal subunit protein uL30">
    <location>
        <begin position="1"/>
        <end position="59"/>
    </location>
</feature>
<organism>
    <name type="scientific">Buchnera aphidicola subsp. Acyrthosiphon kondoi</name>
    <name type="common">Acyrthosiphon kondoi symbiotic bacterium</name>
    <dbReference type="NCBI Taxonomy" id="42474"/>
    <lineage>
        <taxon>Bacteria</taxon>
        <taxon>Pseudomonadati</taxon>
        <taxon>Pseudomonadota</taxon>
        <taxon>Gammaproteobacteria</taxon>
        <taxon>Enterobacterales</taxon>
        <taxon>Erwiniaceae</taxon>
        <taxon>Buchnera</taxon>
    </lineage>
</organism>
<gene>
    <name evidence="1" type="primary">rpmD</name>
</gene>
<proteinExistence type="inferred from homology"/>
<accession>P46184</accession>
<comment type="subunit">
    <text evidence="1">Part of the 50S ribosomal subunit.</text>
</comment>
<comment type="similarity">
    <text evidence="1">Belongs to the universal ribosomal protein uL30 family.</text>
</comment>